<keyword id="KW-0007">Acetylation</keyword>
<keyword id="KW-0025">Alternative splicing</keyword>
<keyword id="KW-0067">ATP-binding</keyword>
<keyword id="KW-0256">Endoplasmic reticulum</keyword>
<keyword id="KW-0333">Golgi apparatus</keyword>
<keyword id="KW-0418">Kinase</keyword>
<keyword id="KW-0443">Lipid metabolism</keyword>
<keyword id="KW-0472">Membrane</keyword>
<keyword id="KW-0496">Mitochondrion</keyword>
<keyword id="KW-1000">Mitochondrion outer membrane</keyword>
<keyword id="KW-0547">Nucleotide-binding</keyword>
<keyword id="KW-0597">Phosphoprotein</keyword>
<keyword id="KW-1185">Reference proteome</keyword>
<keyword id="KW-0808">Transferase</keyword>
<dbReference type="EC" id="2.7.1.67" evidence="4"/>
<dbReference type="EMBL" id="AK028974">
    <property type="protein sequence ID" value="BAC26222.1"/>
    <property type="molecule type" value="mRNA"/>
</dbReference>
<dbReference type="EMBL" id="AK053614">
    <property type="protein sequence ID" value="BAC35448.1"/>
    <property type="molecule type" value="mRNA"/>
</dbReference>
<dbReference type="EMBL" id="AK157918">
    <property type="protein sequence ID" value="BAE34263.1"/>
    <property type="molecule type" value="mRNA"/>
</dbReference>
<dbReference type="EMBL" id="AK172074">
    <property type="protein sequence ID" value="BAE42812.1"/>
    <property type="molecule type" value="mRNA"/>
</dbReference>
<dbReference type="EMBL" id="CH466620">
    <property type="protein sequence ID" value="EDL38762.1"/>
    <property type="molecule type" value="Genomic_DNA"/>
</dbReference>
<dbReference type="EMBL" id="BC079846">
    <property type="protein sequence ID" value="AAH79846.1"/>
    <property type="molecule type" value="mRNA"/>
</dbReference>
<dbReference type="EMBL" id="BC113176">
    <property type="protein sequence ID" value="AAI13177.1"/>
    <property type="molecule type" value="mRNA"/>
</dbReference>
<dbReference type="EMBL" id="BC113781">
    <property type="protein sequence ID" value="AAI13782.1"/>
    <property type="molecule type" value="mRNA"/>
</dbReference>
<dbReference type="EMBL" id="BC138457">
    <property type="protein sequence ID" value="AAI38458.1"/>
    <property type="molecule type" value="mRNA"/>
</dbReference>
<dbReference type="EMBL" id="BC138458">
    <property type="protein sequence ID" value="AAI38459.1"/>
    <property type="molecule type" value="mRNA"/>
</dbReference>
<dbReference type="CCDS" id="CCDS17599.1">
    <molecule id="Q8BKC8-2"/>
</dbReference>
<dbReference type="CCDS" id="CCDS79978.1">
    <molecule id="Q8BKC8-1"/>
</dbReference>
<dbReference type="CCDS" id="CCDS79979.1">
    <molecule id="Q8BKC8-3"/>
</dbReference>
<dbReference type="RefSeq" id="NP_001280644.1">
    <molecule id="Q8BKC8-1"/>
    <property type="nucleotide sequence ID" value="NM_001293715.1"/>
</dbReference>
<dbReference type="RefSeq" id="NP_001280645.1">
    <molecule id="Q8BKC8-3"/>
    <property type="nucleotide sequence ID" value="NM_001293716.1"/>
</dbReference>
<dbReference type="RefSeq" id="NP_780565.2">
    <molecule id="Q8BKC8-2"/>
    <property type="nucleotide sequence ID" value="NM_175356.3"/>
</dbReference>
<dbReference type="SMR" id="Q8BKC8"/>
<dbReference type="BioGRID" id="223458">
    <property type="interactions" value="12"/>
</dbReference>
<dbReference type="FunCoup" id="Q8BKC8">
    <property type="interactions" value="4153"/>
</dbReference>
<dbReference type="IntAct" id="Q8BKC8">
    <property type="interactions" value="23"/>
</dbReference>
<dbReference type="MINT" id="Q8BKC8"/>
<dbReference type="STRING" id="10090.ENSMUSP00000102872"/>
<dbReference type="GlyGen" id="Q8BKC8">
    <property type="glycosylation" value="1 site"/>
</dbReference>
<dbReference type="iPTMnet" id="Q8BKC8"/>
<dbReference type="PhosphoSitePlus" id="Q8BKC8"/>
<dbReference type="jPOST" id="Q8BKC8"/>
<dbReference type="PaxDb" id="10090-ENSMUSP00000072134"/>
<dbReference type="PeptideAtlas" id="Q8BKC8"/>
<dbReference type="ProteomicsDB" id="289565">
    <molecule id="Q8BKC8-1"/>
</dbReference>
<dbReference type="ProteomicsDB" id="289566">
    <molecule id="Q8BKC8-2"/>
</dbReference>
<dbReference type="ProteomicsDB" id="289567">
    <molecule id="Q8BKC8-3"/>
</dbReference>
<dbReference type="Pumba" id="Q8BKC8"/>
<dbReference type="Antibodypedia" id="1666">
    <property type="antibodies" value="139 antibodies from 30 providers"/>
</dbReference>
<dbReference type="DNASU" id="107650"/>
<dbReference type="Ensembl" id="ENSMUST00000072287.12">
    <molecule id="Q8BKC8-2"/>
    <property type="protein sequence ID" value="ENSMUSP00000072134.6"/>
    <property type="gene ID" value="ENSMUSG00000038861.15"/>
</dbReference>
<dbReference type="Ensembl" id="ENSMUST00000107251.9">
    <molecule id="Q8BKC8-1"/>
    <property type="protein sequence ID" value="ENSMUSP00000102872.3"/>
    <property type="gene ID" value="ENSMUSG00000038861.15"/>
</dbReference>
<dbReference type="Ensembl" id="ENSMUST00000167008.8">
    <molecule id="Q8BKC8-3"/>
    <property type="protein sequence ID" value="ENSMUSP00000132150.2"/>
    <property type="gene ID" value="ENSMUSG00000038861.15"/>
</dbReference>
<dbReference type="GeneID" id="107650"/>
<dbReference type="KEGG" id="mmu:107650"/>
<dbReference type="UCSC" id="uc008qhl.3">
    <molecule id="Q8BKC8-2"/>
    <property type="organism name" value="mouse"/>
</dbReference>
<dbReference type="UCSC" id="uc008qhm.3">
    <molecule id="Q8BKC8-1"/>
    <property type="organism name" value="mouse"/>
</dbReference>
<dbReference type="AGR" id="MGI:1334433"/>
<dbReference type="CTD" id="5298"/>
<dbReference type="MGI" id="MGI:1334433">
    <property type="gene designation" value="Pi4kb"/>
</dbReference>
<dbReference type="VEuPathDB" id="HostDB:ENSMUSG00000038861"/>
<dbReference type="eggNOG" id="KOG0903">
    <property type="taxonomic scope" value="Eukaryota"/>
</dbReference>
<dbReference type="GeneTree" id="ENSGT00550000074892"/>
<dbReference type="HOGENOM" id="CLU_002446_6_0_1"/>
<dbReference type="InParanoid" id="Q8BKC8"/>
<dbReference type="OMA" id="HKLANCN"/>
<dbReference type="OrthoDB" id="20675at9989"/>
<dbReference type="TreeFam" id="TF102042"/>
<dbReference type="Reactome" id="R-MMU-1660514">
    <property type="pathway name" value="Synthesis of PIPs at the Golgi membrane"/>
</dbReference>
<dbReference type="BioGRID-ORCS" id="107650">
    <property type="hits" value="22 hits in 81 CRISPR screens"/>
</dbReference>
<dbReference type="ChiTaRS" id="Pi4kb">
    <property type="organism name" value="mouse"/>
</dbReference>
<dbReference type="PRO" id="PR:Q8BKC8"/>
<dbReference type="Proteomes" id="UP000000589">
    <property type="component" value="Chromosome 3"/>
</dbReference>
<dbReference type="RNAct" id="Q8BKC8">
    <property type="molecule type" value="protein"/>
</dbReference>
<dbReference type="Bgee" id="ENSMUSG00000038861">
    <property type="expression patterns" value="Expressed in dentate gyrus of hippocampal formation granule cell and 204 other cell types or tissues"/>
</dbReference>
<dbReference type="ExpressionAtlas" id="Q8BKC8">
    <property type="expression patterns" value="baseline and differential"/>
</dbReference>
<dbReference type="GO" id="GO:0005794">
    <property type="term" value="C:Golgi apparatus"/>
    <property type="evidence" value="ECO:0000266"/>
    <property type="project" value="MGI"/>
</dbReference>
<dbReference type="GO" id="GO:0000139">
    <property type="term" value="C:Golgi membrane"/>
    <property type="evidence" value="ECO:0007669"/>
    <property type="project" value="UniProtKB-SubCell"/>
</dbReference>
<dbReference type="GO" id="GO:0005741">
    <property type="term" value="C:mitochondrial outer membrane"/>
    <property type="evidence" value="ECO:0007669"/>
    <property type="project" value="UniProtKB-SubCell"/>
</dbReference>
<dbReference type="GO" id="GO:0030867">
    <property type="term" value="C:rough endoplasmic reticulum membrane"/>
    <property type="evidence" value="ECO:0007669"/>
    <property type="project" value="UniProtKB-SubCell"/>
</dbReference>
<dbReference type="GO" id="GO:0004430">
    <property type="term" value="F:1-phosphatidylinositol 4-kinase activity"/>
    <property type="evidence" value="ECO:0000250"/>
    <property type="project" value="UniProtKB"/>
</dbReference>
<dbReference type="GO" id="GO:0071889">
    <property type="term" value="F:14-3-3 protein binding"/>
    <property type="evidence" value="ECO:0000250"/>
    <property type="project" value="UniProtKB"/>
</dbReference>
<dbReference type="GO" id="GO:0005524">
    <property type="term" value="F:ATP binding"/>
    <property type="evidence" value="ECO:0007669"/>
    <property type="project" value="UniProtKB-KW"/>
</dbReference>
<dbReference type="GO" id="GO:0048839">
    <property type="term" value="P:inner ear development"/>
    <property type="evidence" value="ECO:0000250"/>
    <property type="project" value="UniProtKB"/>
</dbReference>
<dbReference type="GO" id="GO:0007040">
    <property type="term" value="P:lysosome organization"/>
    <property type="evidence" value="ECO:0000266"/>
    <property type="project" value="MGI"/>
</dbReference>
<dbReference type="GO" id="GO:0046854">
    <property type="term" value="P:phosphatidylinositol phosphate biosynthetic process"/>
    <property type="evidence" value="ECO:0007669"/>
    <property type="project" value="InterPro"/>
</dbReference>
<dbReference type="CDD" id="cd22246">
    <property type="entry name" value="PI4KB_NTD"/>
    <property type="match status" value="1"/>
</dbReference>
<dbReference type="CDD" id="cd05168">
    <property type="entry name" value="PI4Kc_III_beta"/>
    <property type="match status" value="1"/>
</dbReference>
<dbReference type="FunFam" id="3.30.1010.10:FF:000031">
    <property type="entry name" value="Phosphatidylinositol 4-kinase beta"/>
    <property type="match status" value="1"/>
</dbReference>
<dbReference type="FunFam" id="1.10.1070.11:FF:000004">
    <property type="entry name" value="Phosphatidylinositol 4-kinase, catalytic, beta"/>
    <property type="match status" value="1"/>
</dbReference>
<dbReference type="Gene3D" id="1.10.1070.11">
    <property type="entry name" value="Phosphatidylinositol 3-/4-kinase, catalytic domain"/>
    <property type="match status" value="1"/>
</dbReference>
<dbReference type="Gene3D" id="3.30.1010.10">
    <property type="entry name" value="Phosphatidylinositol 3-kinase Catalytic Subunit, Chain A, domain 4"/>
    <property type="match status" value="1"/>
</dbReference>
<dbReference type="InterPro" id="IPR011009">
    <property type="entry name" value="Kinase-like_dom_sf"/>
</dbReference>
<dbReference type="InterPro" id="IPR000403">
    <property type="entry name" value="PI3/4_kinase_cat_dom"/>
</dbReference>
<dbReference type="InterPro" id="IPR036940">
    <property type="entry name" value="PI3/4_kinase_cat_sf"/>
</dbReference>
<dbReference type="InterPro" id="IPR018936">
    <property type="entry name" value="PI3/4_kinase_CS"/>
</dbReference>
<dbReference type="InterPro" id="IPR001263">
    <property type="entry name" value="PI3K_accessory_dom"/>
</dbReference>
<dbReference type="InterPro" id="IPR049160">
    <property type="entry name" value="PI4KB-PIK1_PIK"/>
</dbReference>
<dbReference type="InterPro" id="IPR015433">
    <property type="entry name" value="PI_Kinase"/>
</dbReference>
<dbReference type="PANTHER" id="PTHR10048:SF22">
    <property type="entry name" value="PHOSPHATIDYLINOSITOL 4-KINASE BETA"/>
    <property type="match status" value="1"/>
</dbReference>
<dbReference type="PANTHER" id="PTHR10048">
    <property type="entry name" value="PHOSPHATIDYLINOSITOL KINASE"/>
    <property type="match status" value="1"/>
</dbReference>
<dbReference type="Pfam" id="PF00454">
    <property type="entry name" value="PI3_PI4_kinase"/>
    <property type="match status" value="1"/>
</dbReference>
<dbReference type="Pfam" id="PF21245">
    <property type="entry name" value="PI4KB-PIK1_PIK"/>
    <property type="match status" value="1"/>
</dbReference>
<dbReference type="SMART" id="SM00146">
    <property type="entry name" value="PI3Kc"/>
    <property type="match status" value="1"/>
</dbReference>
<dbReference type="SUPFAM" id="SSF56112">
    <property type="entry name" value="Protein kinase-like (PK-like)"/>
    <property type="match status" value="1"/>
</dbReference>
<dbReference type="PROSITE" id="PS00915">
    <property type="entry name" value="PI3_4_KINASE_1"/>
    <property type="match status" value="1"/>
</dbReference>
<dbReference type="PROSITE" id="PS00916">
    <property type="entry name" value="PI3_4_KINASE_2"/>
    <property type="match status" value="1"/>
</dbReference>
<dbReference type="PROSITE" id="PS50290">
    <property type="entry name" value="PI3_4_KINASE_3"/>
    <property type="match status" value="1"/>
</dbReference>
<dbReference type="PROSITE" id="PS51545">
    <property type="entry name" value="PIK_HELICAL"/>
    <property type="match status" value="1"/>
</dbReference>
<evidence type="ECO:0000250" key="1"/>
<evidence type="ECO:0000250" key="2">
    <source>
        <dbReference type="UniProtKB" id="O02810"/>
    </source>
</evidence>
<evidence type="ECO:0000250" key="3">
    <source>
        <dbReference type="UniProtKB" id="O08561"/>
    </source>
</evidence>
<evidence type="ECO:0000250" key="4">
    <source>
        <dbReference type="UniProtKB" id="Q9UBF8"/>
    </source>
</evidence>
<evidence type="ECO:0000255" key="5">
    <source>
        <dbReference type="PROSITE-ProRule" id="PRU00269"/>
    </source>
</evidence>
<evidence type="ECO:0000255" key="6">
    <source>
        <dbReference type="PROSITE-ProRule" id="PRU00878"/>
    </source>
</evidence>
<evidence type="ECO:0000256" key="7">
    <source>
        <dbReference type="SAM" id="MobiDB-lite"/>
    </source>
</evidence>
<evidence type="ECO:0000303" key="8">
    <source>
    </source>
</evidence>
<evidence type="ECO:0000303" key="9">
    <source>
    </source>
</evidence>
<evidence type="ECO:0000305" key="10"/>
<evidence type="ECO:0000312" key="11">
    <source>
        <dbReference type="EMBL" id="BAC35448.1"/>
    </source>
</evidence>
<evidence type="ECO:0007744" key="12">
    <source>
    </source>
</evidence>
<evidence type="ECO:0007744" key="13">
    <source>
    </source>
</evidence>
<organism evidence="11">
    <name type="scientific">Mus musculus</name>
    <name type="common">Mouse</name>
    <dbReference type="NCBI Taxonomy" id="10090"/>
    <lineage>
        <taxon>Eukaryota</taxon>
        <taxon>Metazoa</taxon>
        <taxon>Chordata</taxon>
        <taxon>Craniata</taxon>
        <taxon>Vertebrata</taxon>
        <taxon>Euteleostomi</taxon>
        <taxon>Mammalia</taxon>
        <taxon>Eutheria</taxon>
        <taxon>Euarchontoglires</taxon>
        <taxon>Glires</taxon>
        <taxon>Rodentia</taxon>
        <taxon>Myomorpha</taxon>
        <taxon>Muroidea</taxon>
        <taxon>Muridae</taxon>
        <taxon>Murinae</taxon>
        <taxon>Mus</taxon>
        <taxon>Mus</taxon>
    </lineage>
</organism>
<feature type="initiator methionine" description="Removed" evidence="4">
    <location>
        <position position="1"/>
    </location>
</feature>
<feature type="chain" id="PRO_0000088830" description="Phosphatidylinositol 4-kinase beta">
    <location>
        <begin position="2"/>
        <end position="816"/>
    </location>
</feature>
<feature type="domain" description="PIK helical" evidence="6">
    <location>
        <begin position="52"/>
        <end position="242"/>
    </location>
</feature>
<feature type="domain" description="PI3K/PI4K catalytic" evidence="5">
    <location>
        <begin position="535"/>
        <end position="801"/>
    </location>
</feature>
<feature type="region of interest" description="Disordered" evidence="7">
    <location>
        <begin position="1"/>
        <end position="30"/>
    </location>
</feature>
<feature type="region of interest" description="Interaction with ACBD3" evidence="4">
    <location>
        <begin position="2"/>
        <end position="68"/>
    </location>
</feature>
<feature type="region of interest" description="Disordered" evidence="7">
    <location>
        <begin position="101"/>
        <end position="120"/>
    </location>
</feature>
<feature type="region of interest" description="Disordered" evidence="7">
    <location>
        <begin position="250"/>
        <end position="318"/>
    </location>
</feature>
<feature type="region of interest" description="G-loop" evidence="5">
    <location>
        <begin position="541"/>
        <end position="547"/>
    </location>
</feature>
<feature type="region of interest" description="Catalytic loop" evidence="5">
    <location>
        <begin position="668"/>
        <end position="676"/>
    </location>
</feature>
<feature type="region of interest" description="Activation loop" evidence="5">
    <location>
        <begin position="687"/>
        <end position="711"/>
    </location>
</feature>
<feature type="compositionally biased region" description="Low complexity" evidence="7">
    <location>
        <begin position="10"/>
        <end position="30"/>
    </location>
</feature>
<feature type="compositionally biased region" description="Polar residues" evidence="7">
    <location>
        <begin position="278"/>
        <end position="297"/>
    </location>
</feature>
<feature type="compositionally biased region" description="Polar residues" evidence="7">
    <location>
        <begin position="306"/>
        <end position="318"/>
    </location>
</feature>
<feature type="modified residue" description="N-acetylglycine" evidence="4">
    <location>
        <position position="2"/>
    </location>
</feature>
<feature type="modified residue" description="Phosphoserine" evidence="4">
    <location>
        <position position="258"/>
    </location>
</feature>
<feature type="modified residue" description="Phosphothreonine" evidence="4">
    <location>
        <position position="263"/>
    </location>
</feature>
<feature type="modified residue" description="Phosphoserine" evidence="4">
    <location>
        <position position="266"/>
    </location>
</feature>
<feature type="modified residue" description="Phosphoserine" evidence="13">
    <location>
        <position position="275"/>
    </location>
</feature>
<feature type="modified residue" description="Phosphoserine" evidence="13">
    <location>
        <position position="277"/>
    </location>
</feature>
<feature type="modified residue" description="Phosphoserine" evidence="13">
    <location>
        <position position="284"/>
    </location>
</feature>
<feature type="modified residue" description="Phosphoserine" evidence="4">
    <location>
        <position position="294"/>
    </location>
</feature>
<feature type="modified residue" description="Phosphoserine" evidence="13">
    <location>
        <position position="428"/>
    </location>
</feature>
<feature type="modified residue" description="Phosphothreonine" evidence="4">
    <location>
        <position position="438"/>
    </location>
</feature>
<feature type="modified residue" description="Phosphoserine" evidence="13">
    <location>
        <position position="511"/>
    </location>
</feature>
<feature type="modified residue" description="Phosphothreonine" evidence="4">
    <location>
        <position position="517"/>
    </location>
</feature>
<feature type="modified residue" description="Phosphothreonine" evidence="4">
    <location>
        <position position="519"/>
    </location>
</feature>
<feature type="splice variant" id="VSP_037134" description="In isoform 3." evidence="8">
    <location>
        <begin position="1"/>
        <end position="332"/>
    </location>
</feature>
<feature type="splice variant" id="VSP_037135" description="In isoform 2." evidence="8 9">
    <location>
        <begin position="304"/>
        <end position="318"/>
    </location>
</feature>
<feature type="sequence conflict" description="In Ref. 1; BAC35448." evidence="10" ref="1">
    <original>S</original>
    <variation>T</variation>
    <location>
        <position position="20"/>
    </location>
</feature>
<feature type="sequence conflict" description="In Ref. 1; BAE42812." evidence="10" ref="1">
    <original>E</original>
    <variation>D</variation>
    <location>
        <position position="135"/>
    </location>
</feature>
<feature type="sequence conflict" description="In Ref. 1; BAE42812." evidence="10" ref="1">
    <original>H</original>
    <variation>R</variation>
    <location>
        <position position="475"/>
    </location>
</feature>
<feature type="modified residue" description="Phosphoserine" evidence="12 13">
    <location sequence="Q8BKC8-2">
        <position position="294"/>
    </location>
</feature>
<protein>
    <recommendedName>
        <fullName>Phosphatidylinositol 4-kinase beta</fullName>
        <shortName>PI4K-beta</shortName>
        <shortName>PI4Kbeta</shortName>
        <shortName>PtdIns 4-kinase beta</shortName>
        <ecNumber evidence="4">2.7.1.67</ecNumber>
    </recommendedName>
</protein>
<proteinExistence type="evidence at protein level"/>
<comment type="function">
    <text evidence="3 4">Phosphorylates phosphatidylinositol (PI) in the first committed step in the production of the second messenger inositol-1,4,5,-trisphosphate (PIP). May regulate Golgi disintegration/reorganization during mitosis, possibly via its phosphorylation (By similarity). Involved in Golgi-to-plasma membrane trafficking (By similarity). May play an important role in the inner ear development.</text>
</comment>
<comment type="catalytic activity">
    <reaction evidence="4">
        <text>a 1,2-diacyl-sn-glycero-3-phospho-(1D-myo-inositol) + ATP = a 1,2-diacyl-sn-glycero-3-phospho-(1D-myo-inositol 4-phosphate) + ADP + H(+)</text>
        <dbReference type="Rhea" id="RHEA:19877"/>
        <dbReference type="ChEBI" id="CHEBI:15378"/>
        <dbReference type="ChEBI" id="CHEBI:30616"/>
        <dbReference type="ChEBI" id="CHEBI:57880"/>
        <dbReference type="ChEBI" id="CHEBI:58178"/>
        <dbReference type="ChEBI" id="CHEBI:456216"/>
        <dbReference type="EC" id="2.7.1.67"/>
    </reaction>
    <physiologicalReaction direction="left-to-right" evidence="4">
        <dbReference type="Rhea" id="RHEA:19878"/>
    </physiologicalReaction>
</comment>
<comment type="cofactor">
    <cofactor evidence="4">
        <name>Mg(2+)</name>
        <dbReference type="ChEBI" id="CHEBI:18420"/>
    </cofactor>
    <cofactor evidence="4">
        <name>Mn(2+)</name>
        <dbReference type="ChEBI" id="CHEBI:29035"/>
    </cofactor>
</comment>
<comment type="activity regulation">
    <text evidence="2">Inhibited by wortmannin. Increased kinase activity upon interaction with NCS1/FREQ.</text>
</comment>
<comment type="subunit">
    <text evidence="3 4">Interacts with ARF1 and ARF3 in the Golgi complex, but not with ARF4, ARF5 or ARF6 (By similarity). Interacts with NCS1/FREQ in a calcium-independent manner. Interacts with CALN1/CABP8 and CALN2/CABP7; in a calcium-dependent manner; this interaction competes with NCS1/FREQ binding (By similarity). Interacts with ACBD3. Interacts with ARMH3, YWHAB, YWHAE, YWHAG, YWHAH, YWHAQ, YWHAZ and SFN (By similarity). Interacts with GGA2 (via VHS domain); the interaction is important for PI4KB location at the Golgi apparatus membrane (By similarity). Interacts with ATG9A.</text>
</comment>
<comment type="subcellular location">
    <subcellularLocation>
        <location evidence="1">Endomembrane system</location>
    </subcellularLocation>
    <subcellularLocation>
        <location evidence="1">Mitochondrion outer membrane</location>
        <topology evidence="1">Peripheral membrane protein</topology>
    </subcellularLocation>
    <subcellularLocation>
        <location evidence="1">Rough endoplasmic reticulum membrane</location>
        <topology evidence="1">Peripheral membrane protein</topology>
    </subcellularLocation>
    <subcellularLocation>
        <location evidence="1">Golgi apparatus</location>
    </subcellularLocation>
    <subcellularLocation>
        <location evidence="4">Golgi apparatus membrane</location>
    </subcellularLocation>
    <text evidence="4">Found in the outer membrane of mitochondria and membranes of the rough endoplasmic reticulum. Recruited to the Golgi complex by the small GTPase ARF to stimulate the synthesis of phosphatidylinositol 4,5-bisphosphate (PIP2) on the Golgi complex. Recruited to the Golgi apparatus membrane by ACBD3, GGA2 is also involved in the recruitment (By similarity).</text>
</comment>
<comment type="alternative products">
    <event type="alternative splicing"/>
    <isoform>
        <id>Q8BKC8-1</id>
        <name>1</name>
        <sequence type="displayed"/>
    </isoform>
    <isoform>
        <id>Q8BKC8-2</id>
        <name>2</name>
        <sequence type="described" ref="VSP_037135"/>
    </isoform>
    <isoform>
        <id>Q8BKC8-3</id>
        <name>3</name>
        <sequence type="described" ref="VSP_037134"/>
    </isoform>
</comment>
<comment type="similarity">
    <text evidence="10">Belongs to the PI3/PI4-kinase family. Type III PI4K subfamily.</text>
</comment>
<gene>
    <name type="primary">Pi4kb</name>
    <name type="synonym">Pik4cb</name>
</gene>
<sequence>MGDMVVEPATLKPTSEPTPSPSGNNGGSLLSVITEGVGELSVIDPEVAQKACQEVLEKVKLLHGGVAISSKGTPLELVNGDGVDNEIRCLDDPPAQIREEEDEMGAGVASGTAKGARRRRQNNSAKQSWLLRLFESKLFDISMAISYLYNSKEPGVQAYIGNRLFYFRNEDVDFYLPQLLNMYIHMDEDVGDAIKPYIVHRCRQSINFSLQCALLLGAYSSDMHISTQRHSRGTKLRKLILSDELKPAHRKRELPTLSPAPDTGLSPSKRTHQRSKSDATASISLSSNLKRTASNPKVENEDEELSSSTESIDNSFSSPVRLAPEREFIKSLMAIGKRLATLPTKEQKTQRLISELSLLNHKLPARVWLPTAGFDHHVVRVPHTQAVVLNSKDKAPYLIYVEVLECENFDTTSVPARIPENRIRSTRSVENLPECGITHEQRAGSFSTVPNYDNDDEAWSVDDIGELQVELPEVHTNSCDNISQFSVDSITSQESKEPVFIAAGDIRRRLSEQLAHTPTAFKRDPEDPSAVALKEPWQEKVRRIREGSPYGHLPNWRLLSVIVKCGDDLRQELLAFQVLKQLQSIWEQERVPLWIKPYKILVISADSGMIEPVVNAVSIHQVKKQSQLSLLDYFLQEHGSYTTEAFLSAQRNFVQSCAGYCLVCYLLQVKDRHNGNILLDAEGHIIHIDFGFILSSSPRNLGFETSAFKLTTEFVDVMGGLNGDMFNYYKMLMLQGLIAARKHMDKVVQIVEIMQQGSQLPCFHGSSTIRNLKERFHMSMTEEQLQLLVEQMVDGSMRSITTKLYDGFQYLTNGIM</sequence>
<accession>Q8BKC8</accession>
<accession>Q14CH6</accession>
<accession>Q14DJ4</accession>
<accession>Q3TA58</accession>
<accession>Q68FH2</accession>
<accession>Q8C146</accession>
<name>PI4KB_MOUSE</name>
<reference key="1">
    <citation type="journal article" date="2005" name="Science">
        <title>The transcriptional landscape of the mammalian genome.</title>
        <authorList>
            <person name="Carninci P."/>
            <person name="Kasukawa T."/>
            <person name="Katayama S."/>
            <person name="Gough J."/>
            <person name="Frith M.C."/>
            <person name="Maeda N."/>
            <person name="Oyama R."/>
            <person name="Ravasi T."/>
            <person name="Lenhard B."/>
            <person name="Wells C."/>
            <person name="Kodzius R."/>
            <person name="Shimokawa K."/>
            <person name="Bajic V.B."/>
            <person name="Brenner S.E."/>
            <person name="Batalov S."/>
            <person name="Forrest A.R."/>
            <person name="Zavolan M."/>
            <person name="Davis M.J."/>
            <person name="Wilming L.G."/>
            <person name="Aidinis V."/>
            <person name="Allen J.E."/>
            <person name="Ambesi-Impiombato A."/>
            <person name="Apweiler R."/>
            <person name="Aturaliya R.N."/>
            <person name="Bailey T.L."/>
            <person name="Bansal M."/>
            <person name="Baxter L."/>
            <person name="Beisel K.W."/>
            <person name="Bersano T."/>
            <person name="Bono H."/>
            <person name="Chalk A.M."/>
            <person name="Chiu K.P."/>
            <person name="Choudhary V."/>
            <person name="Christoffels A."/>
            <person name="Clutterbuck D.R."/>
            <person name="Crowe M.L."/>
            <person name="Dalla E."/>
            <person name="Dalrymple B.P."/>
            <person name="de Bono B."/>
            <person name="Della Gatta G."/>
            <person name="di Bernardo D."/>
            <person name="Down T."/>
            <person name="Engstrom P."/>
            <person name="Fagiolini M."/>
            <person name="Faulkner G."/>
            <person name="Fletcher C.F."/>
            <person name="Fukushima T."/>
            <person name="Furuno M."/>
            <person name="Futaki S."/>
            <person name="Gariboldi M."/>
            <person name="Georgii-Hemming P."/>
            <person name="Gingeras T.R."/>
            <person name="Gojobori T."/>
            <person name="Green R.E."/>
            <person name="Gustincich S."/>
            <person name="Harbers M."/>
            <person name="Hayashi Y."/>
            <person name="Hensch T.K."/>
            <person name="Hirokawa N."/>
            <person name="Hill D."/>
            <person name="Huminiecki L."/>
            <person name="Iacono M."/>
            <person name="Ikeo K."/>
            <person name="Iwama A."/>
            <person name="Ishikawa T."/>
            <person name="Jakt M."/>
            <person name="Kanapin A."/>
            <person name="Katoh M."/>
            <person name="Kawasawa Y."/>
            <person name="Kelso J."/>
            <person name="Kitamura H."/>
            <person name="Kitano H."/>
            <person name="Kollias G."/>
            <person name="Krishnan S.P."/>
            <person name="Kruger A."/>
            <person name="Kummerfeld S.K."/>
            <person name="Kurochkin I.V."/>
            <person name="Lareau L.F."/>
            <person name="Lazarevic D."/>
            <person name="Lipovich L."/>
            <person name="Liu J."/>
            <person name="Liuni S."/>
            <person name="McWilliam S."/>
            <person name="Madan Babu M."/>
            <person name="Madera M."/>
            <person name="Marchionni L."/>
            <person name="Matsuda H."/>
            <person name="Matsuzawa S."/>
            <person name="Miki H."/>
            <person name="Mignone F."/>
            <person name="Miyake S."/>
            <person name="Morris K."/>
            <person name="Mottagui-Tabar S."/>
            <person name="Mulder N."/>
            <person name="Nakano N."/>
            <person name="Nakauchi H."/>
            <person name="Ng P."/>
            <person name="Nilsson R."/>
            <person name="Nishiguchi S."/>
            <person name="Nishikawa S."/>
            <person name="Nori F."/>
            <person name="Ohara O."/>
            <person name="Okazaki Y."/>
            <person name="Orlando V."/>
            <person name="Pang K.C."/>
            <person name="Pavan W.J."/>
            <person name="Pavesi G."/>
            <person name="Pesole G."/>
            <person name="Petrovsky N."/>
            <person name="Piazza S."/>
            <person name="Reed J."/>
            <person name="Reid J.F."/>
            <person name="Ring B.Z."/>
            <person name="Ringwald M."/>
            <person name="Rost B."/>
            <person name="Ruan Y."/>
            <person name="Salzberg S.L."/>
            <person name="Sandelin A."/>
            <person name="Schneider C."/>
            <person name="Schoenbach C."/>
            <person name="Sekiguchi K."/>
            <person name="Semple C.A."/>
            <person name="Seno S."/>
            <person name="Sessa L."/>
            <person name="Sheng Y."/>
            <person name="Shibata Y."/>
            <person name="Shimada H."/>
            <person name="Shimada K."/>
            <person name="Silva D."/>
            <person name="Sinclair B."/>
            <person name="Sperling S."/>
            <person name="Stupka E."/>
            <person name="Sugiura K."/>
            <person name="Sultana R."/>
            <person name="Takenaka Y."/>
            <person name="Taki K."/>
            <person name="Tammoja K."/>
            <person name="Tan S.L."/>
            <person name="Tang S."/>
            <person name="Taylor M.S."/>
            <person name="Tegner J."/>
            <person name="Teichmann S.A."/>
            <person name="Ueda H.R."/>
            <person name="van Nimwegen E."/>
            <person name="Verardo R."/>
            <person name="Wei C.L."/>
            <person name="Yagi K."/>
            <person name="Yamanishi H."/>
            <person name="Zabarovsky E."/>
            <person name="Zhu S."/>
            <person name="Zimmer A."/>
            <person name="Hide W."/>
            <person name="Bult C."/>
            <person name="Grimmond S.M."/>
            <person name="Teasdale R.D."/>
            <person name="Liu E.T."/>
            <person name="Brusic V."/>
            <person name="Quackenbush J."/>
            <person name="Wahlestedt C."/>
            <person name="Mattick J.S."/>
            <person name="Hume D.A."/>
            <person name="Kai C."/>
            <person name="Sasaki D."/>
            <person name="Tomaru Y."/>
            <person name="Fukuda S."/>
            <person name="Kanamori-Katayama M."/>
            <person name="Suzuki M."/>
            <person name="Aoki J."/>
            <person name="Arakawa T."/>
            <person name="Iida J."/>
            <person name="Imamura K."/>
            <person name="Itoh M."/>
            <person name="Kato T."/>
            <person name="Kawaji H."/>
            <person name="Kawagashira N."/>
            <person name="Kawashima T."/>
            <person name="Kojima M."/>
            <person name="Kondo S."/>
            <person name="Konno H."/>
            <person name="Nakano K."/>
            <person name="Ninomiya N."/>
            <person name="Nishio T."/>
            <person name="Okada M."/>
            <person name="Plessy C."/>
            <person name="Shibata K."/>
            <person name="Shiraki T."/>
            <person name="Suzuki S."/>
            <person name="Tagami M."/>
            <person name="Waki K."/>
            <person name="Watahiki A."/>
            <person name="Okamura-Oho Y."/>
            <person name="Suzuki H."/>
            <person name="Kawai J."/>
            <person name="Hayashizaki Y."/>
        </authorList>
    </citation>
    <scope>NUCLEOTIDE SEQUENCE [LARGE SCALE MRNA] (ISOFORM 2)</scope>
    <source>
        <strain>C57BL/6J</strain>
        <strain>NOD</strain>
        <tissue>Eye</tissue>
        <tissue>Inner ear</tissue>
        <tissue>Skin</tissue>
        <tissue>Spleen</tissue>
    </source>
</reference>
<reference key="2">
    <citation type="submission" date="2005-07" db="EMBL/GenBank/DDBJ databases">
        <authorList>
            <person name="Mural R.J."/>
            <person name="Adams M.D."/>
            <person name="Myers E.W."/>
            <person name="Smith H.O."/>
            <person name="Venter J.C."/>
        </authorList>
    </citation>
    <scope>NUCLEOTIDE SEQUENCE [LARGE SCALE GENOMIC DNA]</scope>
</reference>
<reference key="3">
    <citation type="journal article" date="2004" name="Genome Res.">
        <title>The status, quality, and expansion of the NIH full-length cDNA project: the Mammalian Gene Collection (MGC).</title>
        <authorList>
            <consortium name="The MGC Project Team"/>
        </authorList>
    </citation>
    <scope>NUCLEOTIDE SEQUENCE [LARGE SCALE MRNA] (ISOFORMS 1; 2 AND 3)</scope>
    <source>
        <strain>C57BL/6J</strain>
        <tissue>Embryonic brain</tissue>
    </source>
</reference>
<reference key="4">
    <citation type="journal article" date="2007" name="Proc. Natl. Acad. Sci. U.S.A.">
        <title>Large-scale phosphorylation analysis of mouse liver.</title>
        <authorList>
            <person name="Villen J."/>
            <person name="Beausoleil S.A."/>
            <person name="Gerber S.A."/>
            <person name="Gygi S.P."/>
        </authorList>
    </citation>
    <scope>PHOSPHORYLATION [LARGE SCALE ANALYSIS] AT SER-294 (ISOFORM 2)</scope>
    <scope>IDENTIFICATION BY MASS SPECTROMETRY [LARGE SCALE ANALYSIS]</scope>
    <source>
        <tissue>Liver</tissue>
    </source>
</reference>
<reference key="5">
    <citation type="journal article" date="2010" name="Cell">
        <title>A tissue-specific atlas of mouse protein phosphorylation and expression.</title>
        <authorList>
            <person name="Huttlin E.L."/>
            <person name="Jedrychowski M.P."/>
            <person name="Elias J.E."/>
            <person name="Goswami T."/>
            <person name="Rad R."/>
            <person name="Beausoleil S.A."/>
            <person name="Villen J."/>
            <person name="Haas W."/>
            <person name="Sowa M.E."/>
            <person name="Gygi S.P."/>
        </authorList>
    </citation>
    <scope>PHOSPHORYLATION [LARGE SCALE ANALYSIS] AT SER-275; SER-277; SER-284; SER-428 AND SER-511</scope>
    <scope>PHOSPHORYLATION [LARGE SCALE ANALYSIS] AT SER-294 (ISOFORM 2)</scope>
    <scope>IDENTIFICATION BY MASS SPECTROMETRY [LARGE SCALE ANALYSIS]</scope>
    <source>
        <tissue>Brain</tissue>
        <tissue>Brown adipose tissue</tissue>
        <tissue>Heart</tissue>
        <tissue>Kidney</tissue>
        <tissue>Lung</tissue>
        <tissue>Pancreas</tissue>
        <tissue>Spleen</tissue>
        <tissue>Testis</tissue>
    </source>
</reference>